<comment type="function">
    <text evidence="1">Key component of the proton channel; it plays a direct role in the translocation of protons across the membrane.</text>
</comment>
<comment type="subunit">
    <text evidence="1">F-type ATPases have 2 components, CF(1) - the catalytic core - and CF(0) - the membrane proton channel. CF(1) has five subunits: alpha(3), beta(3), gamma(1), delta(1), epsilon(1). CF(0) has three main subunits: a(1), b(2) and c(9-12). The alpha and beta chains form an alternating ring which encloses part of the gamma chain. CF(1) is attached to CF(0) by a central stalk formed by the gamma and epsilon chains, while a peripheral stalk is formed by the delta and b chains.</text>
</comment>
<comment type="subcellular location">
    <subcellularLocation>
        <location evidence="1">Cell membrane</location>
        <topology evidence="1">Multi-pass membrane protein</topology>
    </subcellularLocation>
</comment>
<comment type="similarity">
    <text evidence="1">Belongs to the ATPase A chain family.</text>
</comment>
<protein>
    <recommendedName>
        <fullName evidence="1">ATP synthase subunit a</fullName>
    </recommendedName>
    <alternativeName>
        <fullName evidence="1">ATP synthase F0 sector subunit a</fullName>
    </alternativeName>
    <alternativeName>
        <fullName evidence="1">F-ATPase subunit 6</fullName>
    </alternativeName>
</protein>
<sequence>MEEAKIPMLKLGPITFNLTLLAVCIVTIAVIFAFVFWASRQMKLKPEGKQTALEYLISFVDGIGEEHLDHNLQKSYSLLLFTIFLFVAVANNLGLFTKLETVNGYNLWTSPTANLAFDLALSLFITLMVHIEGVRRRGLVAHLKRLATPWPMTPMNLLEEFTNFLSLAIRLFGNIFAGEVVTGLIVQLANYRVYWWPIAFLVNMAWTAFSVFISCIQAFVFTKLTATYLGKKVNESEE</sequence>
<organism>
    <name type="scientific">Streptococcus pyogenes serotype M4 (strain MGAS10750)</name>
    <dbReference type="NCBI Taxonomy" id="370554"/>
    <lineage>
        <taxon>Bacteria</taxon>
        <taxon>Bacillati</taxon>
        <taxon>Bacillota</taxon>
        <taxon>Bacilli</taxon>
        <taxon>Lactobacillales</taxon>
        <taxon>Streptococcaceae</taxon>
        <taxon>Streptococcus</taxon>
    </lineage>
</organism>
<proteinExistence type="inferred from homology"/>
<evidence type="ECO:0000255" key="1">
    <source>
        <dbReference type="HAMAP-Rule" id="MF_01393"/>
    </source>
</evidence>
<name>ATP6_STRPF</name>
<reference key="1">
    <citation type="journal article" date="2006" name="Proc. Natl. Acad. Sci. U.S.A.">
        <title>Molecular genetic anatomy of inter- and intraserotype variation in the human bacterial pathogen group A Streptococcus.</title>
        <authorList>
            <person name="Beres S.B."/>
            <person name="Richter E.W."/>
            <person name="Nagiec M.J."/>
            <person name="Sumby P."/>
            <person name="Porcella S.F."/>
            <person name="DeLeo F.R."/>
            <person name="Musser J.M."/>
        </authorList>
    </citation>
    <scope>NUCLEOTIDE SEQUENCE [LARGE SCALE GENOMIC DNA]</scope>
    <source>
        <strain>MGAS10750</strain>
    </source>
</reference>
<gene>
    <name evidence="1" type="primary">atpB</name>
    <name type="ordered locus">MGAS10750_Spy0660</name>
</gene>
<accession>Q1J7G4</accession>
<feature type="chain" id="PRO_1000145333" description="ATP synthase subunit a">
    <location>
        <begin position="1"/>
        <end position="238"/>
    </location>
</feature>
<feature type="transmembrane region" description="Helical" evidence="1">
    <location>
        <begin position="18"/>
        <end position="38"/>
    </location>
</feature>
<feature type="transmembrane region" description="Helical" evidence="1">
    <location>
        <begin position="76"/>
        <end position="96"/>
    </location>
</feature>
<feature type="transmembrane region" description="Helical" evidence="1">
    <location>
        <begin position="114"/>
        <end position="134"/>
    </location>
</feature>
<feature type="transmembrane region" description="Helical" evidence="1">
    <location>
        <begin position="166"/>
        <end position="186"/>
    </location>
</feature>
<feature type="transmembrane region" description="Helical" evidence="1">
    <location>
        <begin position="193"/>
        <end position="213"/>
    </location>
</feature>
<keyword id="KW-0066">ATP synthesis</keyword>
<keyword id="KW-1003">Cell membrane</keyword>
<keyword id="KW-0138">CF(0)</keyword>
<keyword id="KW-0375">Hydrogen ion transport</keyword>
<keyword id="KW-0406">Ion transport</keyword>
<keyword id="KW-0472">Membrane</keyword>
<keyword id="KW-0812">Transmembrane</keyword>
<keyword id="KW-1133">Transmembrane helix</keyword>
<keyword id="KW-0813">Transport</keyword>
<dbReference type="EMBL" id="CP000262">
    <property type="protein sequence ID" value="ABF37610.1"/>
    <property type="molecule type" value="Genomic_DNA"/>
</dbReference>
<dbReference type="SMR" id="Q1J7G4"/>
<dbReference type="KEGG" id="spi:MGAS10750_Spy0660"/>
<dbReference type="HOGENOM" id="CLU_041018_2_3_9"/>
<dbReference type="Proteomes" id="UP000002434">
    <property type="component" value="Chromosome"/>
</dbReference>
<dbReference type="GO" id="GO:0005886">
    <property type="term" value="C:plasma membrane"/>
    <property type="evidence" value="ECO:0007669"/>
    <property type="project" value="UniProtKB-SubCell"/>
</dbReference>
<dbReference type="GO" id="GO:0045259">
    <property type="term" value="C:proton-transporting ATP synthase complex"/>
    <property type="evidence" value="ECO:0007669"/>
    <property type="project" value="UniProtKB-KW"/>
</dbReference>
<dbReference type="GO" id="GO:0046933">
    <property type="term" value="F:proton-transporting ATP synthase activity, rotational mechanism"/>
    <property type="evidence" value="ECO:0007669"/>
    <property type="project" value="UniProtKB-UniRule"/>
</dbReference>
<dbReference type="GO" id="GO:0042777">
    <property type="term" value="P:proton motive force-driven plasma membrane ATP synthesis"/>
    <property type="evidence" value="ECO:0007669"/>
    <property type="project" value="TreeGrafter"/>
</dbReference>
<dbReference type="CDD" id="cd00310">
    <property type="entry name" value="ATP-synt_Fo_a_6"/>
    <property type="match status" value="1"/>
</dbReference>
<dbReference type="Gene3D" id="1.20.120.220">
    <property type="entry name" value="ATP synthase, F0 complex, subunit A"/>
    <property type="match status" value="1"/>
</dbReference>
<dbReference type="HAMAP" id="MF_01393">
    <property type="entry name" value="ATP_synth_a_bact"/>
    <property type="match status" value="1"/>
</dbReference>
<dbReference type="InterPro" id="IPR045082">
    <property type="entry name" value="ATP_syn_F0_a_bact/chloroplast"/>
</dbReference>
<dbReference type="InterPro" id="IPR000568">
    <property type="entry name" value="ATP_synth_F0_asu"/>
</dbReference>
<dbReference type="InterPro" id="IPR023011">
    <property type="entry name" value="ATP_synth_F0_asu_AS"/>
</dbReference>
<dbReference type="InterPro" id="IPR035908">
    <property type="entry name" value="F0_ATP_A_sf"/>
</dbReference>
<dbReference type="NCBIfam" id="TIGR01131">
    <property type="entry name" value="ATP_synt_6_or_A"/>
    <property type="match status" value="1"/>
</dbReference>
<dbReference type="NCBIfam" id="NF004479">
    <property type="entry name" value="PRK05815.1-4"/>
    <property type="match status" value="1"/>
</dbReference>
<dbReference type="PANTHER" id="PTHR42823">
    <property type="entry name" value="ATP SYNTHASE SUBUNIT A, CHLOROPLASTIC"/>
    <property type="match status" value="1"/>
</dbReference>
<dbReference type="PANTHER" id="PTHR42823:SF3">
    <property type="entry name" value="ATP SYNTHASE SUBUNIT A, CHLOROPLASTIC"/>
    <property type="match status" value="1"/>
</dbReference>
<dbReference type="Pfam" id="PF00119">
    <property type="entry name" value="ATP-synt_A"/>
    <property type="match status" value="1"/>
</dbReference>
<dbReference type="PRINTS" id="PR00123">
    <property type="entry name" value="ATPASEA"/>
</dbReference>
<dbReference type="SUPFAM" id="SSF81336">
    <property type="entry name" value="F1F0 ATP synthase subunit A"/>
    <property type="match status" value="1"/>
</dbReference>
<dbReference type="PROSITE" id="PS00449">
    <property type="entry name" value="ATPASE_A"/>
    <property type="match status" value="1"/>
</dbReference>